<evidence type="ECO:0000250" key="1">
    <source>
        <dbReference type="UniProtKB" id="Q76FB0"/>
    </source>
</evidence>
<evidence type="ECO:0000255" key="2">
    <source>
        <dbReference type="HAMAP-Rule" id="MF_01378"/>
    </source>
</evidence>
<sequence>MLKRSSWLATLLGLLTVASVSTIVYAIELDEATRTVPLESSGRTVVLTPEQVKRGKRLFNNSCAICHNGGITKTNPNVGLDPESLGLATPQRDNIEALVDYMKDPTSYDGAESIAELHPSIKSAEIFPKMRNLTDEDLFTIAGHILLQPKIVSEKWGGGKIYY</sequence>
<organism>
    <name type="scientific">Porphyra purpurea</name>
    <name type="common">Red seaweed</name>
    <name type="synonym">Ulva purpurea</name>
    <dbReference type="NCBI Taxonomy" id="2787"/>
    <lineage>
        <taxon>Eukaryota</taxon>
        <taxon>Rhodophyta</taxon>
        <taxon>Bangiophyceae</taxon>
        <taxon>Bangiales</taxon>
        <taxon>Bangiaceae</taxon>
        <taxon>Porphyra</taxon>
    </lineage>
</organism>
<proteinExistence type="inferred from homology"/>
<reference key="1">
    <citation type="journal article" date="1995" name="Plant Mol. Biol. Rep.">
        <title>Complete nucleotide sequence of the Porphyra purpurea chloroplast genome.</title>
        <authorList>
            <person name="Reith M.E."/>
            <person name="Munholland J."/>
        </authorList>
    </citation>
    <scope>NUCLEOTIDE SEQUENCE [LARGE SCALE GENOMIC DNA]</scope>
    <source>
        <strain>Avonport</strain>
    </source>
</reference>
<comment type="function">
    <text evidence="2">One of the extrinsic, lumenal subunits of photosystem II (PSII). PSII is a light-driven water plastoquinone oxidoreductase, using light energy to abstract electrons from H(2)O, generating a proton gradient subsequently used for ATP formation. The extrinsic proteins stabilize the structure of photosystem II oxygen-evolving complex (OEC), the ion environment of oxygen evolution and protect the OEC against heat-induced inactivation.</text>
</comment>
<comment type="cofactor">
    <cofactor evidence="2">
        <name>heme c</name>
        <dbReference type="ChEBI" id="CHEBI:61717"/>
    </cofactor>
    <text evidence="2">Binds 1 heme c group covalently per subunit.</text>
</comment>
<comment type="subunit">
    <text evidence="1">PSII is composed of 1 copy each of membrane proteins PsbA, PsbB, PsbC, PsbD, PsbE, PsbF, PsbH, PsbI, PsbJ, PsbK, PsbL, PsbM, PsbT, PsbY, PsbZ, Psb30/Ycf12, at least 3 peripheral proteins of the oxygen-evolving complex and a large number of cofactors. It forms dimeric complexes. The extrinsic subunits in red algae are PsbO (OEC33), PsbQ', cytochrome c-550 and PsbU.</text>
</comment>
<comment type="subcellular location">
    <subcellularLocation>
        <location evidence="2">Plastid</location>
        <location evidence="2">Chloroplast thylakoid membrane</location>
        <topology evidence="2">Peripheral membrane protein</topology>
        <orientation evidence="2">Lumenal side</orientation>
    </subcellularLocation>
    <text evidence="2">Associated with photosystem II at the lumenal side of the thylakoid membrane.</text>
</comment>
<comment type="similarity">
    <text evidence="2">Belongs to the cytochrome c family. PsbV subfamily.</text>
</comment>
<dbReference type="EMBL" id="U38804">
    <property type="protein sequence ID" value="AAC08085.1"/>
    <property type="molecule type" value="Genomic_DNA"/>
</dbReference>
<dbReference type="PIR" id="S73120">
    <property type="entry name" value="S73120"/>
</dbReference>
<dbReference type="RefSeq" id="NP_053809.1">
    <property type="nucleotide sequence ID" value="NC_000925.1"/>
</dbReference>
<dbReference type="SMR" id="P51199"/>
<dbReference type="GeneID" id="809823"/>
<dbReference type="GO" id="GO:0009535">
    <property type="term" value="C:chloroplast thylakoid membrane"/>
    <property type="evidence" value="ECO:0007669"/>
    <property type="project" value="UniProtKB-SubCell"/>
</dbReference>
<dbReference type="GO" id="GO:0009523">
    <property type="term" value="C:photosystem II"/>
    <property type="evidence" value="ECO:0007669"/>
    <property type="project" value="UniProtKB-KW"/>
</dbReference>
<dbReference type="GO" id="GO:0009055">
    <property type="term" value="F:electron transfer activity"/>
    <property type="evidence" value="ECO:0007669"/>
    <property type="project" value="InterPro"/>
</dbReference>
<dbReference type="GO" id="GO:0020037">
    <property type="term" value="F:heme binding"/>
    <property type="evidence" value="ECO:0007669"/>
    <property type="project" value="InterPro"/>
</dbReference>
<dbReference type="GO" id="GO:0005506">
    <property type="term" value="F:iron ion binding"/>
    <property type="evidence" value="ECO:0007669"/>
    <property type="project" value="InterPro"/>
</dbReference>
<dbReference type="GO" id="GO:0019684">
    <property type="term" value="P:photosynthesis, light reaction"/>
    <property type="evidence" value="ECO:0007669"/>
    <property type="project" value="UniProtKB-UniRule"/>
</dbReference>
<dbReference type="GO" id="GO:0022904">
    <property type="term" value="P:respiratory electron transport chain"/>
    <property type="evidence" value="ECO:0007669"/>
    <property type="project" value="InterPro"/>
</dbReference>
<dbReference type="Gene3D" id="1.10.760.10">
    <property type="entry name" value="Cytochrome c-like domain"/>
    <property type="match status" value="1"/>
</dbReference>
<dbReference type="HAMAP" id="MF_01378">
    <property type="entry name" value="PSII_Cyt550"/>
    <property type="match status" value="1"/>
</dbReference>
<dbReference type="InterPro" id="IPR009056">
    <property type="entry name" value="Cyt_c-like_dom"/>
</dbReference>
<dbReference type="InterPro" id="IPR036909">
    <property type="entry name" value="Cyt_c-like_dom_sf"/>
</dbReference>
<dbReference type="InterPro" id="IPR029490">
    <property type="entry name" value="Cytochrom_C550"/>
</dbReference>
<dbReference type="InterPro" id="IPR017851">
    <property type="entry name" value="PsbV_cyt_c550"/>
</dbReference>
<dbReference type="InterPro" id="IPR016003">
    <property type="entry name" value="PsbV_cyt_c550-like"/>
</dbReference>
<dbReference type="NCBIfam" id="TIGR03045">
    <property type="entry name" value="PS_II_C550"/>
    <property type="match status" value="1"/>
</dbReference>
<dbReference type="Pfam" id="PF14495">
    <property type="entry name" value="Cytochrom_C550"/>
    <property type="match status" value="1"/>
</dbReference>
<dbReference type="PIRSF" id="PIRSF005890">
    <property type="entry name" value="Phot_II_cyt_c550"/>
    <property type="match status" value="1"/>
</dbReference>
<dbReference type="SUPFAM" id="SSF46626">
    <property type="entry name" value="Cytochrome c"/>
    <property type="match status" value="1"/>
</dbReference>
<dbReference type="PROSITE" id="PS51007">
    <property type="entry name" value="CYTC"/>
    <property type="match status" value="1"/>
</dbReference>
<name>CY550_PORPU</name>
<protein>
    <recommendedName>
        <fullName evidence="2">Photosystem II extrinsic protein V</fullName>
        <shortName evidence="2">PsbV</shortName>
    </recommendedName>
    <alternativeName>
        <fullName evidence="2">Cytochrome c-550</fullName>
    </alternativeName>
    <alternativeName>
        <fullName evidence="2">Cytochrome c550</fullName>
    </alternativeName>
</protein>
<accession>P51199</accession>
<gene>
    <name evidence="2" type="primary">psbV</name>
</gene>
<geneLocation type="chloroplast"/>
<keyword id="KW-0150">Chloroplast</keyword>
<keyword id="KW-0249">Electron transport</keyword>
<keyword id="KW-0349">Heme</keyword>
<keyword id="KW-0408">Iron</keyword>
<keyword id="KW-0472">Membrane</keyword>
<keyword id="KW-0479">Metal-binding</keyword>
<keyword id="KW-0602">Photosynthesis</keyword>
<keyword id="KW-0604">Photosystem II</keyword>
<keyword id="KW-0934">Plastid</keyword>
<keyword id="KW-0732">Signal</keyword>
<keyword id="KW-0793">Thylakoid</keyword>
<keyword id="KW-0813">Transport</keyword>
<feature type="signal peptide" evidence="2">
    <location>
        <begin position="1"/>
        <end position="26"/>
    </location>
</feature>
<feature type="chain" id="PRO_0000006517" description="Photosystem II extrinsic protein V">
    <location>
        <begin position="27"/>
        <end position="163"/>
    </location>
</feature>
<feature type="binding site" description="covalent" evidence="2">
    <location>
        <position position="63"/>
    </location>
    <ligand>
        <name>heme c</name>
        <dbReference type="ChEBI" id="CHEBI:61717"/>
    </ligand>
</feature>
<feature type="binding site" description="covalent" evidence="2">
    <location>
        <position position="66"/>
    </location>
    <ligand>
        <name>heme c</name>
        <dbReference type="ChEBI" id="CHEBI:61717"/>
    </ligand>
</feature>
<feature type="binding site" description="axial binding residue" evidence="2">
    <location>
        <position position="67"/>
    </location>
    <ligand>
        <name>heme c</name>
        <dbReference type="ChEBI" id="CHEBI:61717"/>
    </ligand>
    <ligandPart>
        <name>Fe</name>
        <dbReference type="ChEBI" id="CHEBI:18248"/>
    </ligandPart>
</feature>
<feature type="binding site" description="axial binding residue" evidence="2">
    <location>
        <position position="118"/>
    </location>
    <ligand>
        <name>heme c</name>
        <dbReference type="ChEBI" id="CHEBI:61717"/>
    </ligand>
    <ligandPart>
        <name>Fe</name>
        <dbReference type="ChEBI" id="CHEBI:18248"/>
    </ligandPart>
</feature>